<evidence type="ECO:0000255" key="1">
    <source>
        <dbReference type="HAMAP-Rule" id="MF_00496"/>
    </source>
</evidence>
<keyword id="KW-0119">Carbohydrate metabolism</keyword>
<keyword id="KW-0963">Cytoplasm</keyword>
<keyword id="KW-0456">Lyase</keyword>
<keyword id="KW-0704">Schiff base</keyword>
<comment type="function">
    <text evidence="1">Catalyzes the reversible formation of fructose 6-phosphate from dihydroxyacetone and D-glyceraldehyde 3-phosphate via an aldolization reaction.</text>
</comment>
<comment type="catalytic activity">
    <reaction evidence="1">
        <text>beta-D-fructose 6-phosphate = dihydroxyacetone + D-glyceraldehyde 3-phosphate</text>
        <dbReference type="Rhea" id="RHEA:28002"/>
        <dbReference type="ChEBI" id="CHEBI:16016"/>
        <dbReference type="ChEBI" id="CHEBI:57634"/>
        <dbReference type="ChEBI" id="CHEBI:59776"/>
    </reaction>
</comment>
<comment type="subunit">
    <text evidence="1">Homodecamer.</text>
</comment>
<comment type="subcellular location">
    <subcellularLocation>
        <location evidence="1">Cytoplasm</location>
    </subcellularLocation>
</comment>
<comment type="similarity">
    <text evidence="1">Belongs to the transaldolase family. Type 3A subfamily.</text>
</comment>
<dbReference type="EC" id="4.1.2.-" evidence="1"/>
<dbReference type="EMBL" id="CP001127">
    <property type="protein sequence ID" value="ACF92081.1"/>
    <property type="molecule type" value="Genomic_DNA"/>
</dbReference>
<dbReference type="RefSeq" id="WP_000424869.1">
    <property type="nucleotide sequence ID" value="NC_011094.1"/>
</dbReference>
<dbReference type="SMR" id="B4TQG9"/>
<dbReference type="KEGG" id="sew:SeSA_A4326"/>
<dbReference type="HOGENOM" id="CLU_079764_2_0_6"/>
<dbReference type="Proteomes" id="UP000001865">
    <property type="component" value="Chromosome"/>
</dbReference>
<dbReference type="GO" id="GO:0005737">
    <property type="term" value="C:cytoplasm"/>
    <property type="evidence" value="ECO:0007669"/>
    <property type="project" value="UniProtKB-SubCell"/>
</dbReference>
<dbReference type="GO" id="GO:0097023">
    <property type="term" value="F:fructose 6-phosphate aldolase activity"/>
    <property type="evidence" value="ECO:0007669"/>
    <property type="project" value="RHEA"/>
</dbReference>
<dbReference type="GO" id="GO:0006000">
    <property type="term" value="P:fructose metabolic process"/>
    <property type="evidence" value="ECO:0007669"/>
    <property type="project" value="UniProtKB-UniRule"/>
</dbReference>
<dbReference type="CDD" id="cd00956">
    <property type="entry name" value="Transaldolase_FSA"/>
    <property type="match status" value="1"/>
</dbReference>
<dbReference type="FunFam" id="3.20.20.70:FF:000018">
    <property type="entry name" value="Probable transaldolase"/>
    <property type="match status" value="1"/>
</dbReference>
<dbReference type="Gene3D" id="3.20.20.70">
    <property type="entry name" value="Aldolase class I"/>
    <property type="match status" value="1"/>
</dbReference>
<dbReference type="HAMAP" id="MF_00496">
    <property type="entry name" value="F6P_aldolase"/>
    <property type="match status" value="1"/>
</dbReference>
<dbReference type="InterPro" id="IPR013785">
    <property type="entry name" value="Aldolase_TIM"/>
</dbReference>
<dbReference type="InterPro" id="IPR023001">
    <property type="entry name" value="F6P_aldolase"/>
</dbReference>
<dbReference type="InterPro" id="IPR001585">
    <property type="entry name" value="TAL/FSA"/>
</dbReference>
<dbReference type="InterPro" id="IPR004731">
    <property type="entry name" value="Transaldolase_3B/F6P_aldolase"/>
</dbReference>
<dbReference type="InterPro" id="IPR018225">
    <property type="entry name" value="Transaldolase_AS"/>
</dbReference>
<dbReference type="InterPro" id="IPR033919">
    <property type="entry name" value="TSA/FSA_arc/bac"/>
</dbReference>
<dbReference type="NCBIfam" id="TIGR00875">
    <property type="entry name" value="fsa_talC_mipB"/>
    <property type="match status" value="1"/>
</dbReference>
<dbReference type="NCBIfam" id="NF009296">
    <property type="entry name" value="PRK12653.1"/>
    <property type="match status" value="1"/>
</dbReference>
<dbReference type="PANTHER" id="PTHR10683:SF40">
    <property type="entry name" value="FRUCTOSE-6-PHOSPHATE ALDOLASE 1-RELATED"/>
    <property type="match status" value="1"/>
</dbReference>
<dbReference type="PANTHER" id="PTHR10683">
    <property type="entry name" value="TRANSALDOLASE"/>
    <property type="match status" value="1"/>
</dbReference>
<dbReference type="Pfam" id="PF00923">
    <property type="entry name" value="TAL_FSA"/>
    <property type="match status" value="1"/>
</dbReference>
<dbReference type="SUPFAM" id="SSF51569">
    <property type="entry name" value="Aldolase"/>
    <property type="match status" value="1"/>
</dbReference>
<dbReference type="PROSITE" id="PS01054">
    <property type="entry name" value="TRANSALDOLASE_1"/>
    <property type="match status" value="1"/>
</dbReference>
<protein>
    <recommendedName>
        <fullName evidence="1">Fructose-6-phosphate aldolase</fullName>
        <ecNumber evidence="1">4.1.2.-</ecNumber>
    </recommendedName>
</protein>
<proteinExistence type="inferred from homology"/>
<sequence>MELYLDTANVAEVERLARIFPIAGVTTNPSIVAASKESIWDVLPRLQNAIGEEGTLFAQTMSRDAKGMVEEAKRLNNAIPGIVVKIPVTAEGLAAINLLKKEGIVTLGTAVYSASQGLLAALAGAKYVAPYVNRVDAQGGDGIRMVQELQTLLEHHAPDSMVLAASFKTPRQALDCLLAGCQAITLPLDVAQQMLNTPAVESAIERFEQDWKNAFGNLNL</sequence>
<gene>
    <name evidence="1" type="primary">fsa</name>
    <name type="ordered locus">SeSA_A4326</name>
</gene>
<accession>B4TQG9</accession>
<feature type="chain" id="PRO_1000126380" description="Fructose-6-phosphate aldolase">
    <location>
        <begin position="1"/>
        <end position="220"/>
    </location>
</feature>
<feature type="active site" description="Schiff-base intermediate with substrate" evidence="1">
    <location>
        <position position="85"/>
    </location>
</feature>
<reference key="1">
    <citation type="journal article" date="2011" name="J. Bacteriol.">
        <title>Comparative genomics of 28 Salmonella enterica isolates: evidence for CRISPR-mediated adaptive sublineage evolution.</title>
        <authorList>
            <person name="Fricke W.F."/>
            <person name="Mammel M.K."/>
            <person name="McDermott P.F."/>
            <person name="Tartera C."/>
            <person name="White D.G."/>
            <person name="Leclerc J.E."/>
            <person name="Ravel J."/>
            <person name="Cebula T.A."/>
        </authorList>
    </citation>
    <scope>NUCLEOTIDE SEQUENCE [LARGE SCALE GENOMIC DNA]</scope>
    <source>
        <strain>CVM19633</strain>
    </source>
</reference>
<name>FSA_SALSV</name>
<organism>
    <name type="scientific">Salmonella schwarzengrund (strain CVM19633)</name>
    <dbReference type="NCBI Taxonomy" id="439843"/>
    <lineage>
        <taxon>Bacteria</taxon>
        <taxon>Pseudomonadati</taxon>
        <taxon>Pseudomonadota</taxon>
        <taxon>Gammaproteobacteria</taxon>
        <taxon>Enterobacterales</taxon>
        <taxon>Enterobacteriaceae</taxon>
        <taxon>Salmonella</taxon>
    </lineage>
</organism>